<gene>
    <name type="ordered locus">PC1_1167</name>
</gene>
<reference key="1">
    <citation type="submission" date="2009-07" db="EMBL/GenBank/DDBJ databases">
        <title>Complete sequence of Pectobacterium carotovorum subsp. carotovorum PC1.</title>
        <authorList>
            <consortium name="US DOE Joint Genome Institute"/>
            <person name="Lucas S."/>
            <person name="Copeland A."/>
            <person name="Lapidus A."/>
            <person name="Glavina del Rio T."/>
            <person name="Tice H."/>
            <person name="Bruce D."/>
            <person name="Goodwin L."/>
            <person name="Pitluck S."/>
            <person name="Munk A.C."/>
            <person name="Brettin T."/>
            <person name="Detter J.C."/>
            <person name="Han C."/>
            <person name="Tapia R."/>
            <person name="Larimer F."/>
            <person name="Land M."/>
            <person name="Hauser L."/>
            <person name="Kyrpides N."/>
            <person name="Mikhailova N."/>
            <person name="Balakrishnan V."/>
            <person name="Glasner J."/>
            <person name="Perna N.T."/>
        </authorList>
    </citation>
    <scope>NUCLEOTIDE SEQUENCE [LARGE SCALE GENOMIC DNA]</scope>
    <source>
        <strain>PC1</strain>
    </source>
</reference>
<comment type="subcellular location">
    <subcellularLocation>
        <location evidence="1">Cell membrane</location>
        <topology evidence="1">Single-pass membrane protein</topology>
    </subcellularLocation>
</comment>
<comment type="similarity">
    <text evidence="1">Belongs to the UPF0370 family.</text>
</comment>
<sequence length="63" mass="7666">MAWLADYWWIILIILIGMLINGIKELRNVDHTRFLLNKPKLPPHRDNNDKWDDEDDDWPKKKP</sequence>
<protein>
    <recommendedName>
        <fullName evidence="1">UPF0370 protein PC1_1167</fullName>
    </recommendedName>
</protein>
<name>Y1167_PECCP</name>
<keyword id="KW-1003">Cell membrane</keyword>
<keyword id="KW-0472">Membrane</keyword>
<keyword id="KW-0812">Transmembrane</keyword>
<keyword id="KW-1133">Transmembrane helix</keyword>
<organism>
    <name type="scientific">Pectobacterium carotovorum subsp. carotovorum (strain PC1)</name>
    <dbReference type="NCBI Taxonomy" id="561230"/>
    <lineage>
        <taxon>Bacteria</taxon>
        <taxon>Pseudomonadati</taxon>
        <taxon>Pseudomonadota</taxon>
        <taxon>Gammaproteobacteria</taxon>
        <taxon>Enterobacterales</taxon>
        <taxon>Pectobacteriaceae</taxon>
        <taxon>Pectobacterium</taxon>
    </lineage>
</organism>
<feature type="chain" id="PRO_1000215518" description="UPF0370 protein PC1_1167">
    <location>
        <begin position="1"/>
        <end position="63"/>
    </location>
</feature>
<feature type="transmembrane region" description="Helical" evidence="1">
    <location>
        <begin position="3"/>
        <end position="23"/>
    </location>
</feature>
<feature type="region of interest" description="Disordered" evidence="2">
    <location>
        <begin position="37"/>
        <end position="63"/>
    </location>
</feature>
<accession>C6DBU8</accession>
<evidence type="ECO:0000255" key="1">
    <source>
        <dbReference type="HAMAP-Rule" id="MF_01566"/>
    </source>
</evidence>
<evidence type="ECO:0000256" key="2">
    <source>
        <dbReference type="SAM" id="MobiDB-lite"/>
    </source>
</evidence>
<proteinExistence type="inferred from homology"/>
<dbReference type="EMBL" id="CP001657">
    <property type="protein sequence ID" value="ACT12215.1"/>
    <property type="molecule type" value="Genomic_DNA"/>
</dbReference>
<dbReference type="RefSeq" id="WP_015839454.1">
    <property type="nucleotide sequence ID" value="NC_012917.1"/>
</dbReference>
<dbReference type="SMR" id="C6DBU8"/>
<dbReference type="STRING" id="561230.PC1_1167"/>
<dbReference type="KEGG" id="pct:PC1_1167"/>
<dbReference type="eggNOG" id="ENOG5032YJI">
    <property type="taxonomic scope" value="Bacteria"/>
</dbReference>
<dbReference type="HOGENOM" id="CLU_198936_0_0_6"/>
<dbReference type="Proteomes" id="UP000002736">
    <property type="component" value="Chromosome"/>
</dbReference>
<dbReference type="GO" id="GO:0005886">
    <property type="term" value="C:plasma membrane"/>
    <property type="evidence" value="ECO:0007669"/>
    <property type="project" value="UniProtKB-SubCell"/>
</dbReference>
<dbReference type="HAMAP" id="MF_01566">
    <property type="entry name" value="UPF0370"/>
    <property type="match status" value="1"/>
</dbReference>
<dbReference type="InterPro" id="IPR020910">
    <property type="entry name" value="UPF0370"/>
</dbReference>
<dbReference type="NCBIfam" id="NF010185">
    <property type="entry name" value="PRK13664.1"/>
    <property type="match status" value="1"/>
</dbReference>
<dbReference type="Pfam" id="PF13980">
    <property type="entry name" value="UPF0370"/>
    <property type="match status" value="1"/>
</dbReference>